<dbReference type="EC" id="2.3.1.48" evidence="1"/>
<dbReference type="EC" id="2.3.1.-" evidence="1"/>
<dbReference type="EMBL" id="BX005093">
    <property type="status" value="NOT_ANNOTATED_CDS"/>
    <property type="molecule type" value="Genomic_DNA"/>
</dbReference>
<dbReference type="EMBL" id="FO818663">
    <property type="status" value="NOT_ANNOTATED_CDS"/>
    <property type="molecule type" value="Genomic_DNA"/>
</dbReference>
<dbReference type="EMBL" id="DQ017634">
    <property type="protein sequence ID" value="AAY85289.1"/>
    <property type="molecule type" value="mRNA"/>
</dbReference>
<dbReference type="RefSeq" id="NP_001410703.1">
    <property type="nucleotide sequence ID" value="NM_001423774.1"/>
</dbReference>
<dbReference type="RefSeq" id="XP_009297593.1">
    <property type="nucleotide sequence ID" value="XM_009299318.2"/>
</dbReference>
<dbReference type="SMR" id="A0A0R4IXF6"/>
<dbReference type="FunCoup" id="A0A0R4IXF6">
    <property type="interactions" value="1561"/>
</dbReference>
<dbReference type="STRING" id="7955.ENSDARP00000155753"/>
<dbReference type="PaxDb" id="7955-ENSDARP00000011795"/>
<dbReference type="Ensembl" id="ENSDART00000157682">
    <property type="protein sequence ID" value="ENSDARP00000141597"/>
    <property type="gene ID" value="ENSDARG00000104734"/>
</dbReference>
<dbReference type="GeneID" id="555517"/>
<dbReference type="eggNOG" id="KOG1472">
    <property type="taxonomic scope" value="Eukaryota"/>
</dbReference>
<dbReference type="InParanoid" id="A0A0R4IXF6"/>
<dbReference type="OrthoDB" id="1937912at2759"/>
<dbReference type="Reactome" id="R-DRE-5689880">
    <property type="pathway name" value="Ub-specific processing proteases"/>
</dbReference>
<dbReference type="PRO" id="PR:A0A0R4IXF6"/>
<dbReference type="Proteomes" id="UP000000437">
    <property type="component" value="Chromosome 3"/>
</dbReference>
<dbReference type="Bgee" id="ENSDARG00000104734">
    <property type="expression patterns" value="Expressed in blastula and 28 other cell types or tissues"/>
</dbReference>
<dbReference type="ExpressionAtlas" id="A0A0R4IXF6">
    <property type="expression patterns" value="baseline"/>
</dbReference>
<dbReference type="GO" id="GO:0140672">
    <property type="term" value="C:ATAC complex"/>
    <property type="evidence" value="ECO:0000318"/>
    <property type="project" value="GO_Central"/>
</dbReference>
<dbReference type="GO" id="GO:0005813">
    <property type="term" value="C:centrosome"/>
    <property type="evidence" value="ECO:0000250"/>
    <property type="project" value="UniProtKB"/>
</dbReference>
<dbReference type="GO" id="GO:0005737">
    <property type="term" value="C:cytoplasm"/>
    <property type="evidence" value="ECO:0007669"/>
    <property type="project" value="UniProtKB-KW"/>
</dbReference>
<dbReference type="GO" id="GO:0000123">
    <property type="term" value="C:histone acetyltransferase complex"/>
    <property type="evidence" value="ECO:0000250"/>
    <property type="project" value="UniProtKB"/>
</dbReference>
<dbReference type="GO" id="GO:0005634">
    <property type="term" value="C:nucleus"/>
    <property type="evidence" value="ECO:0000250"/>
    <property type="project" value="UniProtKB"/>
</dbReference>
<dbReference type="GO" id="GO:0003682">
    <property type="term" value="F:chromatin binding"/>
    <property type="evidence" value="ECO:0000250"/>
    <property type="project" value="UniProtKB"/>
</dbReference>
<dbReference type="GO" id="GO:0004402">
    <property type="term" value="F:histone acetyltransferase activity"/>
    <property type="evidence" value="ECO:0000250"/>
    <property type="project" value="UniProtKB"/>
</dbReference>
<dbReference type="GO" id="GO:0106229">
    <property type="term" value="F:histone glutaryltransferase activity"/>
    <property type="evidence" value="ECO:0000250"/>
    <property type="project" value="UniProtKB"/>
</dbReference>
<dbReference type="GO" id="GO:0010484">
    <property type="term" value="F:histone H3 acetyltransferase activity"/>
    <property type="evidence" value="ECO:0000318"/>
    <property type="project" value="GO_Central"/>
</dbReference>
<dbReference type="GO" id="GO:0043992">
    <property type="term" value="F:histone H3K9 acetyltransferase activity"/>
    <property type="evidence" value="ECO:0000315"/>
    <property type="project" value="UniProtKB"/>
</dbReference>
<dbReference type="GO" id="GO:0106078">
    <property type="term" value="F:histone succinyltransferase activity"/>
    <property type="evidence" value="ECO:0000250"/>
    <property type="project" value="UniProtKB"/>
</dbReference>
<dbReference type="GO" id="GO:0061733">
    <property type="term" value="F:protein-lysine-acetyltransferase activity"/>
    <property type="evidence" value="ECO:0000250"/>
    <property type="project" value="UniProtKB"/>
</dbReference>
<dbReference type="GO" id="GO:0003713">
    <property type="term" value="F:transcription coactivator activity"/>
    <property type="evidence" value="ECO:0000250"/>
    <property type="project" value="UniProtKB"/>
</dbReference>
<dbReference type="GO" id="GO:0060349">
    <property type="term" value="P:bone morphogenesis"/>
    <property type="evidence" value="ECO:0000315"/>
    <property type="project" value="ZFIN"/>
</dbReference>
<dbReference type="GO" id="GO:0006338">
    <property type="term" value="P:chromatin remodeling"/>
    <property type="evidence" value="ECO:0000318"/>
    <property type="project" value="GO_Central"/>
</dbReference>
<dbReference type="GO" id="GO:0040029">
    <property type="term" value="P:epigenetic regulation of gene expression"/>
    <property type="evidence" value="ECO:0000315"/>
    <property type="project" value="GO_Central"/>
</dbReference>
<dbReference type="GO" id="GO:0007507">
    <property type="term" value="P:heart development"/>
    <property type="evidence" value="ECO:0000315"/>
    <property type="project" value="UniProtKB"/>
</dbReference>
<dbReference type="GO" id="GO:0018393">
    <property type="term" value="P:internal peptidyl-lysine acetylation"/>
    <property type="evidence" value="ECO:0000250"/>
    <property type="project" value="UniProtKB"/>
</dbReference>
<dbReference type="GO" id="GO:0060173">
    <property type="term" value="P:limb development"/>
    <property type="evidence" value="ECO:0000315"/>
    <property type="project" value="UniProtKB"/>
</dbReference>
<dbReference type="GO" id="GO:0007616">
    <property type="term" value="P:long-term memory"/>
    <property type="evidence" value="ECO:0000250"/>
    <property type="project" value="UniProtKB"/>
</dbReference>
<dbReference type="GO" id="GO:0106227">
    <property type="term" value="P:peptidyl-lysine glutarylation"/>
    <property type="evidence" value="ECO:0000250"/>
    <property type="project" value="UniProtKB"/>
</dbReference>
<dbReference type="GO" id="GO:0001819">
    <property type="term" value="P:positive regulation of cytokine production"/>
    <property type="evidence" value="ECO:0000250"/>
    <property type="project" value="UniProtKB"/>
</dbReference>
<dbReference type="GO" id="GO:0045893">
    <property type="term" value="P:positive regulation of DNA-templated transcription"/>
    <property type="evidence" value="ECO:0000250"/>
    <property type="project" value="UniProtKB"/>
</dbReference>
<dbReference type="GO" id="GO:0045944">
    <property type="term" value="P:positive regulation of transcription by RNA polymerase II"/>
    <property type="evidence" value="ECO:0000250"/>
    <property type="project" value="UniProtKB"/>
</dbReference>
<dbReference type="GO" id="GO:1903010">
    <property type="term" value="P:regulation of bone development"/>
    <property type="evidence" value="ECO:0000315"/>
    <property type="project" value="UniProtKB"/>
</dbReference>
<dbReference type="GO" id="GO:0061035">
    <property type="term" value="P:regulation of cartilage development"/>
    <property type="evidence" value="ECO:0000315"/>
    <property type="project" value="UniProtKB"/>
</dbReference>
<dbReference type="GO" id="GO:0045589">
    <property type="term" value="P:regulation of regulatory T cell differentiation"/>
    <property type="evidence" value="ECO:0000250"/>
    <property type="project" value="UniProtKB"/>
</dbReference>
<dbReference type="GO" id="GO:0048167">
    <property type="term" value="P:regulation of synaptic plasticity"/>
    <property type="evidence" value="ECO:0000250"/>
    <property type="project" value="UniProtKB"/>
</dbReference>
<dbReference type="GO" id="GO:0050863">
    <property type="term" value="P:regulation of T cell activation"/>
    <property type="evidence" value="ECO:0000250"/>
    <property type="project" value="UniProtKB"/>
</dbReference>
<dbReference type="CDD" id="cd05509">
    <property type="entry name" value="Bromo_gcn5_like"/>
    <property type="match status" value="1"/>
</dbReference>
<dbReference type="CDD" id="cd04301">
    <property type="entry name" value="NAT_SF"/>
    <property type="match status" value="1"/>
</dbReference>
<dbReference type="FunFam" id="3.40.630.30:FF:000004">
    <property type="entry name" value="Histone acetyltransferase KAT2A"/>
    <property type="match status" value="1"/>
</dbReference>
<dbReference type="FunFam" id="1.20.920.10:FF:000014">
    <property type="entry name" value="Histone acetyltransferase KAT2B"/>
    <property type="match status" value="1"/>
</dbReference>
<dbReference type="Gene3D" id="3.40.630.30">
    <property type="match status" value="1"/>
</dbReference>
<dbReference type="Gene3D" id="1.20.920.10">
    <property type="entry name" value="Bromodomain-like"/>
    <property type="match status" value="1"/>
</dbReference>
<dbReference type="InterPro" id="IPR016181">
    <property type="entry name" value="Acyl_CoA_acyltransferase"/>
</dbReference>
<dbReference type="InterPro" id="IPR001487">
    <property type="entry name" value="Bromodomain"/>
</dbReference>
<dbReference type="InterPro" id="IPR036427">
    <property type="entry name" value="Bromodomain-like_sf"/>
</dbReference>
<dbReference type="InterPro" id="IPR018359">
    <property type="entry name" value="Bromodomain_CS"/>
</dbReference>
<dbReference type="InterPro" id="IPR037800">
    <property type="entry name" value="GCN5"/>
</dbReference>
<dbReference type="InterPro" id="IPR016376">
    <property type="entry name" value="GCN5/PCAF"/>
</dbReference>
<dbReference type="InterPro" id="IPR000182">
    <property type="entry name" value="GNAT_dom"/>
</dbReference>
<dbReference type="InterPro" id="IPR009464">
    <property type="entry name" value="PCAF_N"/>
</dbReference>
<dbReference type="PANTHER" id="PTHR45750">
    <property type="entry name" value="GH11602P"/>
    <property type="match status" value="1"/>
</dbReference>
<dbReference type="PANTHER" id="PTHR45750:SF1">
    <property type="entry name" value="HISTONE ACETYLTRANSFERASE KAT2A"/>
    <property type="match status" value="1"/>
</dbReference>
<dbReference type="Pfam" id="PF00583">
    <property type="entry name" value="Acetyltransf_1"/>
    <property type="match status" value="1"/>
</dbReference>
<dbReference type="Pfam" id="PF00439">
    <property type="entry name" value="Bromodomain"/>
    <property type="match status" value="1"/>
</dbReference>
<dbReference type="Pfam" id="PF06466">
    <property type="entry name" value="PCAF_N"/>
    <property type="match status" value="1"/>
</dbReference>
<dbReference type="PIRSF" id="PIRSF003048">
    <property type="entry name" value="Histone_acetylase_PCAF"/>
    <property type="match status" value="1"/>
</dbReference>
<dbReference type="PRINTS" id="PR00503">
    <property type="entry name" value="BROMODOMAIN"/>
</dbReference>
<dbReference type="SMART" id="SM00297">
    <property type="entry name" value="BROMO"/>
    <property type="match status" value="1"/>
</dbReference>
<dbReference type="SUPFAM" id="SSF55729">
    <property type="entry name" value="Acyl-CoA N-acyltransferases (Nat)"/>
    <property type="match status" value="1"/>
</dbReference>
<dbReference type="SUPFAM" id="SSF47370">
    <property type="entry name" value="Bromodomain"/>
    <property type="match status" value="1"/>
</dbReference>
<dbReference type="PROSITE" id="PS00633">
    <property type="entry name" value="BROMODOMAIN_1"/>
    <property type="match status" value="1"/>
</dbReference>
<dbReference type="PROSITE" id="PS50014">
    <property type="entry name" value="BROMODOMAIN_2"/>
    <property type="match status" value="1"/>
</dbReference>
<dbReference type="PROSITE" id="PS51186">
    <property type="entry name" value="GNAT"/>
    <property type="match status" value="1"/>
</dbReference>
<comment type="function">
    <text evidence="1 5 6">Protein lysine acyltransferase that can act as a acetyltransferase, glutaryltransferasesucc, succinyltransferase or malonyltransferase, depending on the context (By similarity). Acts as a histone lysine succinyltransferase: catalyzes succinylation of histone H3 on 'Lys-79' (H3K79succ), with a maximum frequency around the transcription start sites of genes (By similarity). Succinylation of histones gives a specific tag for epigenetic transcription activation (By similarity). Association with the 2-oxoglutarate dehydrogenase complex, which provides succinyl-CoA, is required for histone succinylation (By similarity). In different complexes, functions either as an acetyltransferase (HAT) or as a succinyltransferase: in the SAGA and ATAC complexes, acts as a histone acetyltransferase (By similarity). Has significant histone acetyltransferase activity with core histones, but not with nucleosome core particles (By similarity). Has a a strong preference for acetylation of H3 at 'Lys-9' (H3K9ac) (By similarity). Acetylation of histones gives a specific tag for epigenetic transcription activation (By similarity). Also acetylates non-histone proteins, such as tbx5 (PubMed:29174768). Involved in heart and limb development by mediating acetylation of tbx5 (PubMed:29174768). Together with kat2b, required for growth and differentiation of craniofacial cartilage and bone by regulating acetylation of histone H3 at 'Lys-9' (H3K9ac) (PubMed:30424580). Also acts as a histone glutaryltransferase: catalyzes glutarylation of histone H4 on 'Lys-91' (H4K91glu), a mark that destabilizes nucleosomes by promoting dissociation of the H2A-H2B dimers from nucleosomes (By similarity).</text>
</comment>
<comment type="catalytic activity">
    <reaction evidence="1">
        <text>L-lysyl-[histone] + acetyl-CoA = N(6)-acetyl-L-lysyl-[histone] + CoA + H(+)</text>
        <dbReference type="Rhea" id="RHEA:21992"/>
        <dbReference type="Rhea" id="RHEA-COMP:9845"/>
        <dbReference type="Rhea" id="RHEA-COMP:11338"/>
        <dbReference type="ChEBI" id="CHEBI:15378"/>
        <dbReference type="ChEBI" id="CHEBI:29969"/>
        <dbReference type="ChEBI" id="CHEBI:57287"/>
        <dbReference type="ChEBI" id="CHEBI:57288"/>
        <dbReference type="ChEBI" id="CHEBI:61930"/>
        <dbReference type="EC" id="2.3.1.48"/>
    </reaction>
    <physiologicalReaction direction="left-to-right" evidence="1">
        <dbReference type="Rhea" id="RHEA:21993"/>
    </physiologicalReaction>
</comment>
<comment type="catalytic activity">
    <reaction evidence="1">
        <text>L-lysyl-[protein] + acetyl-CoA = N(6)-acetyl-L-lysyl-[protein] + CoA + H(+)</text>
        <dbReference type="Rhea" id="RHEA:45948"/>
        <dbReference type="Rhea" id="RHEA-COMP:9752"/>
        <dbReference type="Rhea" id="RHEA-COMP:10731"/>
        <dbReference type="ChEBI" id="CHEBI:15378"/>
        <dbReference type="ChEBI" id="CHEBI:29969"/>
        <dbReference type="ChEBI" id="CHEBI:57287"/>
        <dbReference type="ChEBI" id="CHEBI:57288"/>
        <dbReference type="ChEBI" id="CHEBI:61930"/>
        <dbReference type="EC" id="2.3.1.48"/>
    </reaction>
</comment>
<comment type="catalytic activity">
    <reaction evidence="1">
        <text>succinyl-CoA + L-lysyl-[protein] = N(6)-succinyl-L-lysyl-[protein] + CoA + H(+)</text>
        <dbReference type="Rhea" id="RHEA:16261"/>
        <dbReference type="Rhea" id="RHEA-COMP:9752"/>
        <dbReference type="Rhea" id="RHEA-COMP:11877"/>
        <dbReference type="ChEBI" id="CHEBI:15378"/>
        <dbReference type="ChEBI" id="CHEBI:29969"/>
        <dbReference type="ChEBI" id="CHEBI:57287"/>
        <dbReference type="ChEBI" id="CHEBI:57292"/>
        <dbReference type="ChEBI" id="CHEBI:87830"/>
    </reaction>
</comment>
<comment type="catalytic activity">
    <reaction evidence="1">
        <text>glutaryl-CoA + L-lysyl-[protein] = N(6)-glutaryl-L-lysyl-[protein] + CoA + H(+)</text>
        <dbReference type="Rhea" id="RHEA:18009"/>
        <dbReference type="Rhea" id="RHEA-COMP:9752"/>
        <dbReference type="Rhea" id="RHEA-COMP:11875"/>
        <dbReference type="ChEBI" id="CHEBI:15378"/>
        <dbReference type="ChEBI" id="CHEBI:29969"/>
        <dbReference type="ChEBI" id="CHEBI:57287"/>
        <dbReference type="ChEBI" id="CHEBI:57378"/>
        <dbReference type="ChEBI" id="CHEBI:87828"/>
    </reaction>
    <physiologicalReaction direction="left-to-right" evidence="1">
        <dbReference type="Rhea" id="RHEA:18010"/>
    </physiologicalReaction>
</comment>
<comment type="subcellular location">
    <subcellularLocation>
        <location evidence="1">Nucleus</location>
    </subcellularLocation>
    <subcellularLocation>
        <location evidence="1">Chromosome</location>
    </subcellularLocation>
    <subcellularLocation>
        <location evidence="1">Cytoplasm</location>
        <location evidence="1">Cytoskeleton</location>
        <location evidence="1">Microtubule organizing center</location>
        <location evidence="1">Centrosome</location>
    </subcellularLocation>
</comment>
<comment type="developmental stage">
    <text evidence="5 6">Widely expressed throughout the anterior head region, including the central nervous system, the eye and branchial arches at 24 hours post fertilization (hpf). Expressed strongly in the brain region. By 40-48 hpf, expression remains strongly expressed in the head region but is reduced throughout the rest of the embryo (PubMed:30424580). Expressed in the heart and tail regions throughout developmental stages (PubMed:29174768).</text>
</comment>
<comment type="domain">
    <text evidence="1">Loop3 is required for substrate specificity and adopts different structural conformations in succinyl-CoA-bound and acetyl-CoA-bound forms. Tyr-603 has an important role in the selective binding of succinyl-CoA over acetyl-CoA.</text>
</comment>
<comment type="disruption phenotype">
    <text evidence="5 6">Craniofacial cartilage and bone defects, characterized by shortening and hypoplastic nature of the cartilage elements and disruption of the posterior ceratobranchial cartilages (PubMed:30424580). Morpholino knockdown of kat2a and kat2b leads to impaired heart and limb development. Abnormal fin development is also observed (PubMed:29174768).</text>
</comment>
<comment type="similarity">
    <text evidence="8">Belongs to the acetyltransferase family. GCN5 subfamily.</text>
</comment>
<organism>
    <name type="scientific">Danio rerio</name>
    <name type="common">Zebrafish</name>
    <name type="synonym">Brachydanio rerio</name>
    <dbReference type="NCBI Taxonomy" id="7955"/>
    <lineage>
        <taxon>Eukaryota</taxon>
        <taxon>Metazoa</taxon>
        <taxon>Chordata</taxon>
        <taxon>Craniata</taxon>
        <taxon>Vertebrata</taxon>
        <taxon>Euteleostomi</taxon>
        <taxon>Actinopterygii</taxon>
        <taxon>Neopterygii</taxon>
        <taxon>Teleostei</taxon>
        <taxon>Ostariophysi</taxon>
        <taxon>Cypriniformes</taxon>
        <taxon>Danionidae</taxon>
        <taxon>Danioninae</taxon>
        <taxon>Danio</taxon>
    </lineage>
</organism>
<name>KAT2A_DANRE</name>
<evidence type="ECO:0000250" key="1">
    <source>
        <dbReference type="UniProtKB" id="Q92830"/>
    </source>
</evidence>
<evidence type="ECO:0000255" key="2">
    <source>
        <dbReference type="PROSITE-ProRule" id="PRU00035"/>
    </source>
</evidence>
<evidence type="ECO:0000255" key="3">
    <source>
        <dbReference type="PROSITE-ProRule" id="PRU00532"/>
    </source>
</evidence>
<evidence type="ECO:0000256" key="4">
    <source>
        <dbReference type="SAM" id="MobiDB-lite"/>
    </source>
</evidence>
<evidence type="ECO:0000269" key="5">
    <source>
    </source>
</evidence>
<evidence type="ECO:0000269" key="6">
    <source>
    </source>
</evidence>
<evidence type="ECO:0000303" key="7">
    <source>
    </source>
</evidence>
<evidence type="ECO:0000305" key="8"/>
<keyword id="KW-0012">Acyltransferase</keyword>
<keyword id="KW-0103">Bromodomain</keyword>
<keyword id="KW-0158">Chromosome</keyword>
<keyword id="KW-0963">Cytoplasm</keyword>
<keyword id="KW-0206">Cytoskeleton</keyword>
<keyword id="KW-0539">Nucleus</keyword>
<keyword id="KW-1185">Reference proteome</keyword>
<keyword id="KW-0804">Transcription</keyword>
<keyword id="KW-0805">Transcription regulation</keyword>
<keyword id="KW-0808">Transferase</keyword>
<feature type="chain" id="PRO_0000443447" description="Histone acetyltransferase KAT2A">
    <location>
        <begin position="1"/>
        <end position="795"/>
    </location>
</feature>
<feature type="domain" description="N-acetyltransferase" evidence="3">
    <location>
        <begin position="461"/>
        <end position="614"/>
    </location>
</feature>
<feature type="domain" description="Bromo" evidence="2">
    <location>
        <begin position="686"/>
        <end position="790"/>
    </location>
</feature>
<feature type="region of interest" description="Disordered" evidence="4">
    <location>
        <begin position="1"/>
        <end position="55"/>
    </location>
</feature>
<feature type="region of interest" description="Loop 3" evidence="1">
    <location>
        <begin position="597"/>
        <end position="606"/>
    </location>
</feature>
<feature type="compositionally biased region" description="Polar residues" evidence="4">
    <location>
        <begin position="1"/>
        <end position="18"/>
    </location>
</feature>
<feature type="compositionally biased region" description="Low complexity" evidence="4">
    <location>
        <begin position="19"/>
        <end position="34"/>
    </location>
</feature>
<feature type="active site" description="Proton donor/acceptor" evidence="1">
    <location>
        <position position="533"/>
    </location>
</feature>
<feature type="binding site" evidence="1">
    <location>
        <begin position="537"/>
        <end position="539"/>
    </location>
    <ligand>
        <name>acetyl-CoA</name>
        <dbReference type="ChEBI" id="CHEBI:57288"/>
    </ligand>
</feature>
<feature type="binding site" evidence="1">
    <location>
        <begin position="537"/>
        <end position="539"/>
    </location>
    <ligand>
        <name>succinyl-CoA</name>
        <dbReference type="ChEBI" id="CHEBI:57292"/>
    </ligand>
</feature>
<feature type="binding site" evidence="1">
    <location>
        <begin position="544"/>
        <end position="550"/>
    </location>
    <ligand>
        <name>acetyl-CoA</name>
        <dbReference type="ChEBI" id="CHEBI:57288"/>
    </ligand>
</feature>
<feature type="binding site" evidence="1">
    <location>
        <begin position="544"/>
        <end position="550"/>
    </location>
    <ligand>
        <name>succinyl-CoA</name>
        <dbReference type="ChEBI" id="CHEBI:57292"/>
    </ligand>
</feature>
<feature type="binding site" evidence="1">
    <location>
        <position position="575"/>
    </location>
    <ligand>
        <name>acetyl-CoA</name>
        <dbReference type="ChEBI" id="CHEBI:57288"/>
    </ligand>
</feature>
<feature type="binding site" evidence="1">
    <location>
        <position position="575"/>
    </location>
    <ligand>
        <name>succinyl-CoA</name>
        <dbReference type="ChEBI" id="CHEBI:57292"/>
    </ligand>
</feature>
<feature type="sequence conflict" description="In Ref. 2; AAY85289." evidence="8" ref="2">
    <original>ME</original>
    <variation>LH</variation>
    <location>
        <begin position="712"/>
        <end position="713"/>
    </location>
</feature>
<proteinExistence type="evidence at transcript level"/>
<reference key="1">
    <citation type="journal article" date="2013" name="Nature">
        <title>The zebrafish reference genome sequence and its relationship to the human genome.</title>
        <authorList>
            <person name="Howe K."/>
            <person name="Clark M.D."/>
            <person name="Torroja C.F."/>
            <person name="Torrance J."/>
            <person name="Berthelot C."/>
            <person name="Muffato M."/>
            <person name="Collins J.E."/>
            <person name="Humphray S."/>
            <person name="McLaren K."/>
            <person name="Matthews L."/>
            <person name="McLaren S."/>
            <person name="Sealy I."/>
            <person name="Caccamo M."/>
            <person name="Churcher C."/>
            <person name="Scott C."/>
            <person name="Barrett J.C."/>
            <person name="Koch R."/>
            <person name="Rauch G.J."/>
            <person name="White S."/>
            <person name="Chow W."/>
            <person name="Kilian B."/>
            <person name="Quintais L.T."/>
            <person name="Guerra-Assuncao J.A."/>
            <person name="Zhou Y."/>
            <person name="Gu Y."/>
            <person name="Yen J."/>
            <person name="Vogel J.H."/>
            <person name="Eyre T."/>
            <person name="Redmond S."/>
            <person name="Banerjee R."/>
            <person name="Chi J."/>
            <person name="Fu B."/>
            <person name="Langley E."/>
            <person name="Maguire S.F."/>
            <person name="Laird G.K."/>
            <person name="Lloyd D."/>
            <person name="Kenyon E."/>
            <person name="Donaldson S."/>
            <person name="Sehra H."/>
            <person name="Almeida-King J."/>
            <person name="Loveland J."/>
            <person name="Trevanion S."/>
            <person name="Jones M."/>
            <person name="Quail M."/>
            <person name="Willey D."/>
            <person name="Hunt A."/>
            <person name="Burton J."/>
            <person name="Sims S."/>
            <person name="McLay K."/>
            <person name="Plumb B."/>
            <person name="Davis J."/>
            <person name="Clee C."/>
            <person name="Oliver K."/>
            <person name="Clark R."/>
            <person name="Riddle C."/>
            <person name="Elliot D."/>
            <person name="Threadgold G."/>
            <person name="Harden G."/>
            <person name="Ware D."/>
            <person name="Begum S."/>
            <person name="Mortimore B."/>
            <person name="Kerry G."/>
            <person name="Heath P."/>
            <person name="Phillimore B."/>
            <person name="Tracey A."/>
            <person name="Corby N."/>
            <person name="Dunn M."/>
            <person name="Johnson C."/>
            <person name="Wood J."/>
            <person name="Clark S."/>
            <person name="Pelan S."/>
            <person name="Griffiths G."/>
            <person name="Smith M."/>
            <person name="Glithero R."/>
            <person name="Howden P."/>
            <person name="Barker N."/>
            <person name="Lloyd C."/>
            <person name="Stevens C."/>
            <person name="Harley J."/>
            <person name="Holt K."/>
            <person name="Panagiotidis G."/>
            <person name="Lovell J."/>
            <person name="Beasley H."/>
            <person name="Henderson C."/>
            <person name="Gordon D."/>
            <person name="Auger K."/>
            <person name="Wright D."/>
            <person name="Collins J."/>
            <person name="Raisen C."/>
            <person name="Dyer L."/>
            <person name="Leung K."/>
            <person name="Robertson L."/>
            <person name="Ambridge K."/>
            <person name="Leongamornlert D."/>
            <person name="McGuire S."/>
            <person name="Gilderthorp R."/>
            <person name="Griffiths C."/>
            <person name="Manthravadi D."/>
            <person name="Nichol S."/>
            <person name="Barker G."/>
            <person name="Whitehead S."/>
            <person name="Kay M."/>
            <person name="Brown J."/>
            <person name="Murnane C."/>
            <person name="Gray E."/>
            <person name="Humphries M."/>
            <person name="Sycamore N."/>
            <person name="Barker D."/>
            <person name="Saunders D."/>
            <person name="Wallis J."/>
            <person name="Babbage A."/>
            <person name="Hammond S."/>
            <person name="Mashreghi-Mohammadi M."/>
            <person name="Barr L."/>
            <person name="Martin S."/>
            <person name="Wray P."/>
            <person name="Ellington A."/>
            <person name="Matthews N."/>
            <person name="Ellwood M."/>
            <person name="Woodmansey R."/>
            <person name="Clark G."/>
            <person name="Cooper J."/>
            <person name="Tromans A."/>
            <person name="Grafham D."/>
            <person name="Skuce C."/>
            <person name="Pandian R."/>
            <person name="Andrews R."/>
            <person name="Harrison E."/>
            <person name="Kimberley A."/>
            <person name="Garnett J."/>
            <person name="Fosker N."/>
            <person name="Hall R."/>
            <person name="Garner P."/>
            <person name="Kelly D."/>
            <person name="Bird C."/>
            <person name="Palmer S."/>
            <person name="Gehring I."/>
            <person name="Berger A."/>
            <person name="Dooley C.M."/>
            <person name="Ersan-Urun Z."/>
            <person name="Eser C."/>
            <person name="Geiger H."/>
            <person name="Geisler M."/>
            <person name="Karotki L."/>
            <person name="Kirn A."/>
            <person name="Konantz J."/>
            <person name="Konantz M."/>
            <person name="Oberlander M."/>
            <person name="Rudolph-Geiger S."/>
            <person name="Teucke M."/>
            <person name="Lanz C."/>
            <person name="Raddatz G."/>
            <person name="Osoegawa K."/>
            <person name="Zhu B."/>
            <person name="Rapp A."/>
            <person name="Widaa S."/>
            <person name="Langford C."/>
            <person name="Yang F."/>
            <person name="Schuster S.C."/>
            <person name="Carter N.P."/>
            <person name="Harrow J."/>
            <person name="Ning Z."/>
            <person name="Herrero J."/>
            <person name="Searle S.M."/>
            <person name="Enright A."/>
            <person name="Geisler R."/>
            <person name="Plasterk R.H."/>
            <person name="Lee C."/>
            <person name="Westerfield M."/>
            <person name="de Jong P.J."/>
            <person name="Zon L.I."/>
            <person name="Postlethwait J.H."/>
            <person name="Nusslein-Volhard C."/>
            <person name="Hubbard T.J."/>
            <person name="Roest Crollius H."/>
            <person name="Rogers J."/>
            <person name="Stemple D.L."/>
        </authorList>
    </citation>
    <scope>NUCLEOTIDE SEQUENCE [LARGE SCALE GENOMIC DNA]</scope>
    <source>
        <strain>Tuebingen</strain>
    </source>
</reference>
<reference key="2">
    <citation type="journal article" date="2007" name="PLoS Genet.">
        <title>Unexpected novel relational links uncovered by extensive developmental profiling of nuclear receptor expression.</title>
        <authorList>
            <person name="Bertrand S."/>
            <person name="Thisse B."/>
            <person name="Tavares R."/>
            <person name="Sachs L."/>
            <person name="Chaumot A."/>
            <person name="Bardet P.-L."/>
            <person name="Escriva H."/>
            <person name="Duffraisse M."/>
            <person name="Marchand O."/>
            <person name="Safi R."/>
            <person name="Thisse C."/>
            <person name="Laudet V."/>
        </authorList>
    </citation>
    <scope>NUCLEOTIDE SEQUENCE [MRNA] OF 526-715</scope>
</reference>
<reference key="3">
    <citation type="journal article" date="2017" name="J. Mol. Cell. Cardiol.">
        <title>Acetylation of TBX5 by KAT2B and KAT2A regulates heart and limb development.</title>
        <authorList>
            <person name="Ghosh T.K."/>
            <person name="Aparicio-Sanchez J.J."/>
            <person name="Buxton S."/>
            <person name="Ketley A."/>
            <person name="Mohamed T."/>
            <person name="Rutland C.S."/>
            <person name="Loughna S."/>
            <person name="Brook J.D."/>
        </authorList>
    </citation>
    <scope>FUNCTION</scope>
    <scope>DEVELOPMENTAL STAGE</scope>
    <scope>DISRUPTION PHENOTYPE</scope>
</reference>
<reference key="4">
    <citation type="journal article" date="2018" name="J. Dev. Biol.">
        <title>Kat2a and Kat2b acetyltransferase activity regulates craniofacial cartilage and bone differentiation in zebrafish and mice.</title>
        <authorList>
            <person name="Sen R."/>
            <person name="Pezoa S.A."/>
            <person name="Carpio Shull L."/>
            <person name="Hernandez-Lagunas L."/>
            <person name="Niswander L.A."/>
            <person name="Artinger K.B."/>
        </authorList>
    </citation>
    <scope>FUNCTION</scope>
    <scope>DEVELOPMENTAL STAGE</scope>
    <scope>DISRUPTION PHENOTYPE</scope>
</reference>
<gene>
    <name evidence="7" type="primary">kat2a</name>
</gene>
<sequence length="795" mass="90624">MADPAAQSSAQPRLQQAQSSGPTGSNSNPGAGSSDPARPGLSQQQWSSQKKAQVRSFPRAKKLEKLGVFSSCKANDACKCNGWKNPNPPTAARMELQQQAASLTETCRSCGHSLAEHVSHLENVSEEEINRLLGMVVDVENLFMSVHKEEDTDTKQVYFYLFKLLRKCILQMGKPVVEGSLGSPPFEKPNIEQGVLNFVQYKFSHLAPKERQTMYELSKMFLLCLNYWKLETPSQFRQRAQKEDAAAYKVDYTRWLCYCHVPQSNDSLPRYETCQVFGRSLLKSIFTVTRRQLLEKFRVEKDKLPPEKRTLILTHFPKFLSMLEEEIYGENSPIWEADFTMPASEGTQLGHQTVLSPVSISGSPHSKGSSASALGVTGLDVASSEPTIGEKRKLPEALTLEDAKRIRVMGDIPMELVNEVMKTITDPAAMLGPETSLLSANAARDETARLEERRGIIEFHVIGNSLSQKSNKKILMWLVGLQNVFSHQLPRMPKEYITRLVFDPKHKTLALIKDGRVIGGICFRMFPTQGFTEIVFCAVTSNEQVKGYGTHLMNHLKEYHIKHGILYFLTYADEYAIGYFKKQGFSKDIKVPKSRYLGYIKDYEGATLMECELNPRIPYTELSHIIKRQKEIIKKLIERKQNQIRKVYPGLTCFKEGVRQIPVESIPGIRETGWKPSAKEKSKELKDPDLLYNMLKNLLAQIKTHPDAWPFMEPVKKSEAPDYYEVIRFPIDLKTMTERLKNRYYVTKKLFIADLQRVITNCREYNPPDSEYCKSANTLEKFFYFKLKEAGLIDK</sequence>
<accession>A0A0R4IXF6</accession>
<accession>A0A0R4IN10</accession>
<accession>Q1L672</accession>
<protein>
    <recommendedName>
        <fullName evidence="1">Histone acetyltransferase KAT2A</fullName>
        <ecNumber evidence="1">2.3.1.48</ecNumber>
    </recommendedName>
    <alternativeName>
        <fullName evidence="8">Histone glutaryltransferase KAT2A</fullName>
        <ecNumber evidence="1">2.3.1.-</ecNumber>
    </alternativeName>
    <alternativeName>
        <fullName evidence="1">Histone succinyltransferase KAT2A</fullName>
        <ecNumber evidence="1">2.3.1.-</ecNumber>
    </alternativeName>
    <alternativeName>
        <fullName evidence="7">Lysine acetyltransferase 2A</fullName>
    </alternativeName>
</protein>